<comment type="catalytic activity">
    <reaction>
        <text>tRNA(Arg) + L-arginine + ATP = L-arginyl-tRNA(Arg) + AMP + diphosphate</text>
        <dbReference type="Rhea" id="RHEA:20301"/>
        <dbReference type="Rhea" id="RHEA-COMP:9658"/>
        <dbReference type="Rhea" id="RHEA-COMP:9673"/>
        <dbReference type="ChEBI" id="CHEBI:30616"/>
        <dbReference type="ChEBI" id="CHEBI:32682"/>
        <dbReference type="ChEBI" id="CHEBI:33019"/>
        <dbReference type="ChEBI" id="CHEBI:78442"/>
        <dbReference type="ChEBI" id="CHEBI:78513"/>
        <dbReference type="ChEBI" id="CHEBI:456215"/>
        <dbReference type="EC" id="6.1.1.19"/>
    </reaction>
</comment>
<comment type="subcellular location">
    <subcellularLocation>
        <location evidence="1">Cytoplasm</location>
    </subcellularLocation>
</comment>
<comment type="similarity">
    <text evidence="2">Belongs to the class-I aminoacyl-tRNA synthetase family.</text>
</comment>
<evidence type="ECO:0000250" key="1"/>
<evidence type="ECO:0000305" key="2"/>
<evidence type="ECO:0007829" key="3">
    <source>
        <dbReference type="PDB" id="2ZUE"/>
    </source>
</evidence>
<reference key="1">
    <citation type="journal article" date="1998" name="DNA Res.">
        <title>Complete sequence and gene organization of the genome of a hyper-thermophilic archaebacterium, Pyrococcus horikoshii OT3.</title>
        <authorList>
            <person name="Kawarabayasi Y."/>
            <person name="Sawada M."/>
            <person name="Horikawa H."/>
            <person name="Haikawa Y."/>
            <person name="Hino Y."/>
            <person name="Yamamoto S."/>
            <person name="Sekine M."/>
            <person name="Baba S."/>
            <person name="Kosugi H."/>
            <person name="Hosoyama A."/>
            <person name="Nagai Y."/>
            <person name="Sakai M."/>
            <person name="Ogura K."/>
            <person name="Otsuka R."/>
            <person name="Nakazawa H."/>
            <person name="Takamiya M."/>
            <person name="Ohfuku Y."/>
            <person name="Funahashi T."/>
            <person name="Tanaka T."/>
            <person name="Kudoh Y."/>
            <person name="Yamazaki J."/>
            <person name="Kushida N."/>
            <person name="Oguchi A."/>
            <person name="Aoki K."/>
            <person name="Yoshizawa T."/>
            <person name="Nakamura Y."/>
            <person name="Robb F.T."/>
            <person name="Horikoshi K."/>
            <person name="Masuchi Y."/>
            <person name="Shizuya H."/>
            <person name="Kikuchi H."/>
        </authorList>
    </citation>
    <scope>NUCLEOTIDE SEQUENCE [LARGE SCALE GENOMIC DNA]</scope>
    <source>
        <strain>ATCC 700860 / DSM 12428 / JCM 9974 / NBRC 100139 / OT-3</strain>
    </source>
</reference>
<dbReference type="EC" id="6.1.1.19"/>
<dbReference type="EMBL" id="BA000001">
    <property type="protein sequence ID" value="BAA30585.1"/>
    <property type="molecule type" value="Genomic_DNA"/>
</dbReference>
<dbReference type="PIR" id="A71023">
    <property type="entry name" value="A71023"/>
</dbReference>
<dbReference type="RefSeq" id="WP_010885558.1">
    <property type="nucleotide sequence ID" value="NC_000961.1"/>
</dbReference>
<dbReference type="PDB" id="2ZUE">
    <property type="method" value="X-ray"/>
    <property type="resolution" value="2.00 A"/>
    <property type="chains" value="A=1-629"/>
</dbReference>
<dbReference type="PDB" id="2ZUF">
    <property type="method" value="X-ray"/>
    <property type="resolution" value="2.30 A"/>
    <property type="chains" value="A=1-629"/>
</dbReference>
<dbReference type="PDBsum" id="2ZUE"/>
<dbReference type="PDBsum" id="2ZUF"/>
<dbReference type="SMR" id="O59147"/>
<dbReference type="STRING" id="70601.gene:9378456"/>
<dbReference type="EnsemblBacteria" id="BAA30585">
    <property type="protein sequence ID" value="BAA30585"/>
    <property type="gene ID" value="BAA30585"/>
</dbReference>
<dbReference type="GeneID" id="1443796"/>
<dbReference type="KEGG" id="pho:PH1478"/>
<dbReference type="eggNOG" id="arCOG00487">
    <property type="taxonomic scope" value="Archaea"/>
</dbReference>
<dbReference type="OrthoDB" id="372102at2157"/>
<dbReference type="BRENDA" id="6.1.1.19">
    <property type="organism ID" value="5244"/>
</dbReference>
<dbReference type="EvolutionaryTrace" id="O59147"/>
<dbReference type="Proteomes" id="UP000000752">
    <property type="component" value="Chromosome"/>
</dbReference>
<dbReference type="GO" id="GO:0005737">
    <property type="term" value="C:cytoplasm"/>
    <property type="evidence" value="ECO:0007669"/>
    <property type="project" value="UniProtKB-SubCell"/>
</dbReference>
<dbReference type="GO" id="GO:0004814">
    <property type="term" value="F:arginine-tRNA ligase activity"/>
    <property type="evidence" value="ECO:0007669"/>
    <property type="project" value="UniProtKB-UniRule"/>
</dbReference>
<dbReference type="GO" id="GO:0005524">
    <property type="term" value="F:ATP binding"/>
    <property type="evidence" value="ECO:0007669"/>
    <property type="project" value="UniProtKB-UniRule"/>
</dbReference>
<dbReference type="GO" id="GO:0006420">
    <property type="term" value="P:arginyl-tRNA aminoacylation"/>
    <property type="evidence" value="ECO:0007669"/>
    <property type="project" value="UniProtKB-UniRule"/>
</dbReference>
<dbReference type="CDD" id="cd07956">
    <property type="entry name" value="Anticodon_Ia_Arg"/>
    <property type="match status" value="1"/>
</dbReference>
<dbReference type="CDD" id="cd00671">
    <property type="entry name" value="ArgRS_core"/>
    <property type="match status" value="1"/>
</dbReference>
<dbReference type="FunFam" id="1.10.730.10:FF:000008">
    <property type="entry name" value="Arginine--tRNA ligase"/>
    <property type="match status" value="1"/>
</dbReference>
<dbReference type="FunFam" id="3.30.1360.70:FF:000008">
    <property type="entry name" value="Arginine--tRNA ligase"/>
    <property type="match status" value="1"/>
</dbReference>
<dbReference type="FunFam" id="3.40.50.620:FF:000190">
    <property type="entry name" value="Arginine--tRNA ligase"/>
    <property type="match status" value="1"/>
</dbReference>
<dbReference type="Gene3D" id="3.30.1360.70">
    <property type="entry name" value="Arginyl tRNA synthetase N-terminal domain"/>
    <property type="match status" value="1"/>
</dbReference>
<dbReference type="Gene3D" id="3.40.50.620">
    <property type="entry name" value="HUPs"/>
    <property type="match status" value="1"/>
</dbReference>
<dbReference type="Gene3D" id="1.10.730.10">
    <property type="entry name" value="Isoleucyl-tRNA Synthetase, Domain 1"/>
    <property type="match status" value="1"/>
</dbReference>
<dbReference type="HAMAP" id="MF_00123">
    <property type="entry name" value="Arg_tRNA_synth"/>
    <property type="match status" value="1"/>
</dbReference>
<dbReference type="InterPro" id="IPR001412">
    <property type="entry name" value="aa-tRNA-synth_I_CS"/>
</dbReference>
<dbReference type="InterPro" id="IPR001278">
    <property type="entry name" value="Arg-tRNA-ligase"/>
</dbReference>
<dbReference type="InterPro" id="IPR005148">
    <property type="entry name" value="Arg-tRNA-synth_N"/>
</dbReference>
<dbReference type="InterPro" id="IPR036695">
    <property type="entry name" value="Arg-tRNA-synth_N_sf"/>
</dbReference>
<dbReference type="InterPro" id="IPR035684">
    <property type="entry name" value="ArgRS_core"/>
</dbReference>
<dbReference type="InterPro" id="IPR008909">
    <property type="entry name" value="DALR_anticod-bd"/>
</dbReference>
<dbReference type="InterPro" id="IPR014729">
    <property type="entry name" value="Rossmann-like_a/b/a_fold"/>
</dbReference>
<dbReference type="InterPro" id="IPR009080">
    <property type="entry name" value="tRNAsynth_Ia_anticodon-bd"/>
</dbReference>
<dbReference type="NCBIfam" id="TIGR00456">
    <property type="entry name" value="argS"/>
    <property type="match status" value="1"/>
</dbReference>
<dbReference type="NCBIfam" id="NF002447">
    <property type="entry name" value="PRK01611.3-4"/>
    <property type="match status" value="1"/>
</dbReference>
<dbReference type="PANTHER" id="PTHR11956:SF5">
    <property type="entry name" value="ARGININE--TRNA LIGASE, CYTOPLASMIC"/>
    <property type="match status" value="1"/>
</dbReference>
<dbReference type="PANTHER" id="PTHR11956">
    <property type="entry name" value="ARGINYL-TRNA SYNTHETASE"/>
    <property type="match status" value="1"/>
</dbReference>
<dbReference type="Pfam" id="PF03485">
    <property type="entry name" value="Arg_tRNA_synt_N"/>
    <property type="match status" value="1"/>
</dbReference>
<dbReference type="Pfam" id="PF05746">
    <property type="entry name" value="DALR_1"/>
    <property type="match status" value="1"/>
</dbReference>
<dbReference type="Pfam" id="PF00750">
    <property type="entry name" value="tRNA-synt_1d"/>
    <property type="match status" value="2"/>
</dbReference>
<dbReference type="PRINTS" id="PR01038">
    <property type="entry name" value="TRNASYNTHARG"/>
</dbReference>
<dbReference type="SMART" id="SM01016">
    <property type="entry name" value="Arg_tRNA_synt_N"/>
    <property type="match status" value="1"/>
</dbReference>
<dbReference type="SMART" id="SM00836">
    <property type="entry name" value="DALR_1"/>
    <property type="match status" value="1"/>
</dbReference>
<dbReference type="SUPFAM" id="SSF47323">
    <property type="entry name" value="Anticodon-binding domain of a subclass of class I aminoacyl-tRNA synthetases"/>
    <property type="match status" value="1"/>
</dbReference>
<dbReference type="SUPFAM" id="SSF55190">
    <property type="entry name" value="Arginyl-tRNA synthetase (ArgRS), N-terminal 'additional' domain"/>
    <property type="match status" value="1"/>
</dbReference>
<dbReference type="SUPFAM" id="SSF52374">
    <property type="entry name" value="Nucleotidylyl transferase"/>
    <property type="match status" value="1"/>
</dbReference>
<dbReference type="PROSITE" id="PS00178">
    <property type="entry name" value="AA_TRNA_LIGASE_I"/>
    <property type="match status" value="1"/>
</dbReference>
<name>SYR_PYRHO</name>
<protein>
    <recommendedName>
        <fullName>Arginine--tRNA ligase</fullName>
        <ecNumber>6.1.1.19</ecNumber>
    </recommendedName>
    <alternativeName>
        <fullName>Arginyl-tRNA synthetase</fullName>
        <shortName>ArgRS</shortName>
    </alternativeName>
</protein>
<sequence>MLMEIRESVKERIEEIIKEIAPQWEGEIELKETPDPKLGDFGTPIAFKLAKLLKRPPIEIAEKIVEKLKLNLPEGIKDVKAVNGYINVFIDYPHFARILINDILAKGDRFGSSEIGKGKKVIVEHTSVNPTKPLHMGHARNAILGDVMARILRFLGYEVEVQNYIDDLGIQFAQVYWGYLRLKEEFERIMNELRERGLKDNPIDHALGLLYVEVNRRLEDNPELENEIRDIMKKLESGELYGRKLAEEVVRAQMVTTYKLGVKYDLLVWESDIVRRKLFEIALELLSKNENFYIPSDGKYRGAFVMDLRKLFPDMKNPILVLRRSDGTATYTGKDIAYHLWKFGKIDVDLLYKEWDSTTWTTAPDGKSMPNKFGNANIVINVIGAEQKHPQLAIKYALQLLGFEDAAANLYHLAYEHVERPEGKFSGRKGTWVGFTVDEVIQEAVKRARELIEEKNPALSDEEKAEVAEKVGIGAIRYNLIKYSPDKKIIFRWEDVLNFEGESAPYIQYAHARCSSILRKAEEEGIKVDPETLFKNADFTKLSERERELVIMLSKFPRIVEQAGKDVKPHLIAWFANELASLFNKFYMDHPVLKAEEGVREARLLLVMAVEQVLKNALYLMGIEAPERM</sequence>
<organism>
    <name type="scientific">Pyrococcus horikoshii (strain ATCC 700860 / DSM 12428 / JCM 9974 / NBRC 100139 / OT-3)</name>
    <dbReference type="NCBI Taxonomy" id="70601"/>
    <lineage>
        <taxon>Archaea</taxon>
        <taxon>Methanobacteriati</taxon>
        <taxon>Methanobacteriota</taxon>
        <taxon>Thermococci</taxon>
        <taxon>Thermococcales</taxon>
        <taxon>Thermococcaceae</taxon>
        <taxon>Pyrococcus</taxon>
    </lineage>
</organism>
<gene>
    <name type="primary">argS</name>
    <name type="ordered locus">PH1478</name>
</gene>
<keyword id="KW-0002">3D-structure</keyword>
<keyword id="KW-0030">Aminoacyl-tRNA synthetase</keyword>
<keyword id="KW-0067">ATP-binding</keyword>
<keyword id="KW-0963">Cytoplasm</keyword>
<keyword id="KW-0436">Ligase</keyword>
<keyword id="KW-0547">Nucleotide-binding</keyword>
<keyword id="KW-0648">Protein biosynthesis</keyword>
<accession>O59147</accession>
<feature type="chain" id="PRO_0000151653" description="Arginine--tRNA ligase">
    <location>
        <begin position="1"/>
        <end position="629"/>
    </location>
</feature>
<feature type="short sequence motif" description="'HIGH' region">
    <location>
        <begin position="128"/>
        <end position="138"/>
    </location>
</feature>
<feature type="helix" evidence="3">
    <location>
        <begin position="6"/>
        <end position="20"/>
    </location>
</feature>
<feature type="helix" evidence="3">
    <location>
        <begin position="36"/>
        <end position="38"/>
    </location>
</feature>
<feature type="strand" evidence="3">
    <location>
        <begin position="40"/>
        <end position="43"/>
    </location>
</feature>
<feature type="helix" evidence="3">
    <location>
        <begin position="45"/>
        <end position="53"/>
    </location>
</feature>
<feature type="helix" evidence="3">
    <location>
        <begin position="57"/>
        <end position="68"/>
    </location>
</feature>
<feature type="strand" evidence="3">
    <location>
        <begin position="76"/>
        <end position="82"/>
    </location>
</feature>
<feature type="strand" evidence="3">
    <location>
        <begin position="85"/>
        <end position="90"/>
    </location>
</feature>
<feature type="helix" evidence="3">
    <location>
        <begin position="92"/>
        <end position="106"/>
    </location>
</feature>
<feature type="helix" evidence="3">
    <location>
        <begin position="107"/>
        <end position="109"/>
    </location>
</feature>
<feature type="turn" evidence="3">
    <location>
        <begin position="115"/>
        <end position="118"/>
    </location>
</feature>
<feature type="strand" evidence="3">
    <location>
        <begin position="120"/>
        <end position="124"/>
    </location>
</feature>
<feature type="helix" evidence="3">
    <location>
        <begin position="136"/>
        <end position="154"/>
    </location>
</feature>
<feature type="strand" evidence="3">
    <location>
        <begin position="158"/>
        <end position="165"/>
    </location>
</feature>
<feature type="helix" evidence="3">
    <location>
        <begin position="170"/>
        <end position="181"/>
    </location>
</feature>
<feature type="helix" evidence="3">
    <location>
        <begin position="183"/>
        <end position="196"/>
    </location>
</feature>
<feature type="helix" evidence="3">
    <location>
        <begin position="203"/>
        <end position="220"/>
    </location>
</feature>
<feature type="helix" evidence="3">
    <location>
        <begin position="222"/>
        <end position="224"/>
    </location>
</feature>
<feature type="helix" evidence="3">
    <location>
        <begin position="225"/>
        <end position="237"/>
    </location>
</feature>
<feature type="strand" evidence="3">
    <location>
        <begin position="238"/>
        <end position="240"/>
    </location>
</feature>
<feature type="helix" evidence="3">
    <location>
        <begin position="243"/>
        <end position="260"/>
    </location>
</feature>
<feature type="strand" evidence="3">
    <location>
        <begin position="265"/>
        <end position="269"/>
    </location>
</feature>
<feature type="helix" evidence="3">
    <location>
        <begin position="270"/>
        <end position="275"/>
    </location>
</feature>
<feature type="helix" evidence="3">
    <location>
        <begin position="278"/>
        <end position="287"/>
    </location>
</feature>
<feature type="strand" evidence="3">
    <location>
        <begin position="296"/>
        <end position="298"/>
    </location>
</feature>
<feature type="turn" evidence="3">
    <location>
        <begin position="299"/>
        <end position="302"/>
    </location>
</feature>
<feature type="strand" evidence="3">
    <location>
        <begin position="304"/>
        <end position="307"/>
    </location>
</feature>
<feature type="turn" evidence="3">
    <location>
        <begin position="309"/>
        <end position="311"/>
    </location>
</feature>
<feature type="strand" evidence="3">
    <location>
        <begin position="313"/>
        <end position="316"/>
    </location>
</feature>
<feature type="strand" evidence="3">
    <location>
        <begin position="319"/>
        <end position="323"/>
    </location>
</feature>
<feature type="helix" evidence="3">
    <location>
        <begin position="331"/>
        <end position="342"/>
    </location>
</feature>
<feature type="strand" evidence="3">
    <location>
        <begin position="351"/>
        <end position="354"/>
    </location>
</feature>
<feature type="strand" evidence="3">
    <location>
        <begin position="356"/>
        <end position="358"/>
    </location>
</feature>
<feature type="strand" evidence="3">
    <location>
        <begin position="360"/>
        <end position="362"/>
    </location>
</feature>
<feature type="strand" evidence="3">
    <location>
        <begin position="377"/>
        <end position="384"/>
    </location>
</feature>
<feature type="helix" evidence="3">
    <location>
        <begin position="385"/>
        <end position="387"/>
    </location>
</feature>
<feature type="helix" evidence="3">
    <location>
        <begin position="388"/>
        <end position="400"/>
    </location>
</feature>
<feature type="helix" evidence="3">
    <location>
        <begin position="404"/>
        <end position="408"/>
    </location>
</feature>
<feature type="strand" evidence="3">
    <location>
        <begin position="410"/>
        <end position="415"/>
    </location>
</feature>
<feature type="strand" evidence="3">
    <location>
        <begin position="418"/>
        <end position="420"/>
    </location>
</feature>
<feature type="turn" evidence="3">
    <location>
        <begin position="427"/>
        <end position="434"/>
    </location>
</feature>
<feature type="helix" evidence="3">
    <location>
        <begin position="437"/>
        <end position="455"/>
    </location>
</feature>
<feature type="helix" evidence="3">
    <location>
        <begin position="461"/>
        <end position="481"/>
    </location>
</feature>
<feature type="helix" evidence="3">
    <location>
        <begin position="493"/>
        <end position="496"/>
    </location>
</feature>
<feature type="strand" evidence="3">
    <location>
        <begin position="500"/>
        <end position="503"/>
    </location>
</feature>
<feature type="helix" evidence="3">
    <location>
        <begin position="504"/>
        <end position="523"/>
    </location>
</feature>
<feature type="helix" evidence="3">
    <location>
        <begin position="530"/>
        <end position="536"/>
    </location>
</feature>
<feature type="helix" evidence="3">
    <location>
        <begin position="544"/>
        <end position="565"/>
    </location>
</feature>
<feature type="helix" evidence="3">
    <location>
        <begin position="570"/>
        <end position="589"/>
    </location>
</feature>
<feature type="helix" evidence="3">
    <location>
        <begin position="599"/>
        <end position="620"/>
    </location>
</feature>
<proteinExistence type="evidence at protein level"/>